<accession>Q766C3</accession>
<protein>
    <recommendedName>
        <fullName>Aspartic proteinase nepenthesin-1</fullName>
        <ecNumber>3.4.23.12</ecNumber>
    </recommendedName>
    <alternativeName>
        <fullName>Nepenthesin-I</fullName>
    </alternativeName>
</protein>
<comment type="function">
    <text>Extracellular proteinase found in the pitcher fluid of carnivorous plants. Digest prey for nitrogen uptake.</text>
</comment>
<comment type="catalytic activity">
    <reaction>
        <text>Similar to pepsin, but also cleaves on either side of Asp and at Lys-|-Arg.</text>
        <dbReference type="EC" id="3.4.23.12"/>
    </reaction>
</comment>
<comment type="activity regulation">
    <text evidence="1">Inhibited by pepstatin and by diazoacetyl-D,L-norleucine methyl ester (DAN) in the presence of Cu(2+) ions.</text>
</comment>
<comment type="biophysicochemical properties">
    <phDependence>
        <text>Optimum pH is 2.6. Retains 95% and 79% of the original activity after incubation for 30 days at pH 3.0 and pH 10.0 respectively.</text>
    </phDependence>
    <temperatureDependence>
        <text>Optimum temperature is 55 degrees Celsius. Thermostable up to 50 degrees Celsius. Retains 60% of the original activity after incubation for 30 days at 50 degrees Celsius.</text>
    </temperatureDependence>
</comment>
<comment type="subcellular location">
    <subcellularLocation>
        <location evidence="1">Secreted</location>
    </subcellularLocation>
</comment>
<comment type="similarity">
    <text evidence="6">Belongs to the peptidase A1 family.</text>
</comment>
<name>NEP1_NEPGR</name>
<reference key="1">
    <citation type="journal article" date="2004" name="Biochem. J.">
        <title>Enzymic and structural characterization of nepenthesin, a unique member of a novel subfamily of aspartic proteinases.</title>
        <authorList>
            <person name="Athauda S.B.P."/>
            <person name="Matsumoto K."/>
            <person name="Rajapakshe S."/>
            <person name="Kuribayashi M."/>
            <person name="Kojima M."/>
            <person name="Kubomura-Yoshida N."/>
            <person name="Iwamatsu A."/>
            <person name="Shibata C."/>
            <person name="Inoue H."/>
            <person name="Takahashi K."/>
        </authorList>
    </citation>
    <scope>NUCLEOTIDE SEQUENCE [MRNA]</scope>
    <scope>3D-STRUCTURE MODELING</scope>
    <scope>CHARACTERIZATION</scope>
    <scope>VARIANTS NEPENTHESIN IB VAL-233; THR-251 AND GLU-392</scope>
    <source>
        <tissue>Pitcher</tissue>
    </source>
</reference>
<gene>
    <name type="primary">nep1</name>
</gene>
<dbReference type="EC" id="3.4.23.12"/>
<dbReference type="EMBL" id="AB114914">
    <property type="protein sequence ID" value="BAD07474.1"/>
    <property type="molecule type" value="mRNA"/>
</dbReference>
<dbReference type="SMR" id="Q766C3"/>
<dbReference type="MEROPS" id="A01.040"/>
<dbReference type="GlyCosmos" id="Q766C3">
    <property type="glycosylation" value="7 sites, No reported glycans"/>
</dbReference>
<dbReference type="BRENDA" id="3.4.23.12">
    <property type="organism ID" value="8734"/>
</dbReference>
<dbReference type="GO" id="GO:0005576">
    <property type="term" value="C:extracellular region"/>
    <property type="evidence" value="ECO:0007669"/>
    <property type="project" value="UniProtKB-SubCell"/>
</dbReference>
<dbReference type="GO" id="GO:0004190">
    <property type="term" value="F:aspartic-type endopeptidase activity"/>
    <property type="evidence" value="ECO:0007669"/>
    <property type="project" value="UniProtKB-KW"/>
</dbReference>
<dbReference type="GO" id="GO:0006508">
    <property type="term" value="P:proteolysis"/>
    <property type="evidence" value="ECO:0007669"/>
    <property type="project" value="UniProtKB-KW"/>
</dbReference>
<dbReference type="CDD" id="cd05476">
    <property type="entry name" value="pepsin_A_like_plant"/>
    <property type="match status" value="1"/>
</dbReference>
<dbReference type="FunFam" id="2.40.70.10:FF:000033">
    <property type="entry name" value="Aspartyl protease family protein"/>
    <property type="match status" value="1"/>
</dbReference>
<dbReference type="FunFam" id="2.40.70.10:FF:000016">
    <property type="entry name" value="Probable aspartic protease At2g35615"/>
    <property type="match status" value="1"/>
</dbReference>
<dbReference type="Gene3D" id="2.40.70.10">
    <property type="entry name" value="Acid Proteases"/>
    <property type="match status" value="2"/>
</dbReference>
<dbReference type="InterPro" id="IPR001461">
    <property type="entry name" value="Aspartic_peptidase_A1"/>
</dbReference>
<dbReference type="InterPro" id="IPR001969">
    <property type="entry name" value="Aspartic_peptidase_AS"/>
</dbReference>
<dbReference type="InterPro" id="IPR034161">
    <property type="entry name" value="Pepsin-like_plant"/>
</dbReference>
<dbReference type="InterPro" id="IPR033121">
    <property type="entry name" value="PEPTIDASE_A1"/>
</dbReference>
<dbReference type="InterPro" id="IPR021109">
    <property type="entry name" value="Peptidase_aspartic_dom_sf"/>
</dbReference>
<dbReference type="InterPro" id="IPR051708">
    <property type="entry name" value="Plant_Aspart_Prot_A1"/>
</dbReference>
<dbReference type="InterPro" id="IPR032799">
    <property type="entry name" value="TAXi_C"/>
</dbReference>
<dbReference type="InterPro" id="IPR032861">
    <property type="entry name" value="TAXi_N"/>
</dbReference>
<dbReference type="PANTHER" id="PTHR47967:SF23">
    <property type="entry name" value="OS04G0448300 PROTEIN"/>
    <property type="match status" value="1"/>
</dbReference>
<dbReference type="PANTHER" id="PTHR47967">
    <property type="entry name" value="OS07G0603500 PROTEIN-RELATED"/>
    <property type="match status" value="1"/>
</dbReference>
<dbReference type="Pfam" id="PF14541">
    <property type="entry name" value="TAXi_C"/>
    <property type="match status" value="1"/>
</dbReference>
<dbReference type="Pfam" id="PF14543">
    <property type="entry name" value="TAXi_N"/>
    <property type="match status" value="1"/>
</dbReference>
<dbReference type="PRINTS" id="PR00792">
    <property type="entry name" value="PEPSIN"/>
</dbReference>
<dbReference type="SUPFAM" id="SSF50630">
    <property type="entry name" value="Acid proteases"/>
    <property type="match status" value="1"/>
</dbReference>
<dbReference type="PROSITE" id="PS00141">
    <property type="entry name" value="ASP_PROTEASE"/>
    <property type="match status" value="1"/>
</dbReference>
<dbReference type="PROSITE" id="PS51767">
    <property type="entry name" value="PEPTIDASE_A1"/>
    <property type="match status" value="1"/>
</dbReference>
<feature type="signal peptide" evidence="2">
    <location>
        <begin position="1"/>
        <end position="24"/>
    </location>
</feature>
<feature type="propeptide" id="PRO_0000025914" description="Activation peptide" evidence="1">
    <location>
        <begin position="25"/>
        <end position="78"/>
    </location>
</feature>
<feature type="chain" id="PRO_0000025915" description="Aspartic proteinase nepenthesin-1">
    <location>
        <begin position="79"/>
        <end position="437"/>
    </location>
</feature>
<feature type="domain" description="Peptidase A1" evidence="3">
    <location>
        <begin position="95"/>
        <end position="430"/>
    </location>
</feature>
<feature type="active site" evidence="4">
    <location>
        <position position="113"/>
    </location>
</feature>
<feature type="active site" evidence="4">
    <location>
        <position position="315"/>
    </location>
</feature>
<feature type="glycosylation site" description="N-linked (GlcNAc...) asparagine" evidence="2">
    <location>
        <position position="53"/>
    </location>
</feature>
<feature type="glycosylation site" description="N-linked (GlcNAc...) asparagine" evidence="2">
    <location>
        <position position="98"/>
    </location>
</feature>
<feature type="glycosylation site" description="N-linked (GlcNAc...) asparagine" evidence="2">
    <location>
        <position position="131"/>
    </location>
</feature>
<feature type="glycosylation site" description="N-linked (GlcNAc...) asparagine" evidence="2">
    <location>
        <position position="198"/>
    </location>
</feature>
<feature type="glycosylation site" description="N-linked (GlcNAc...) asparagine" evidence="2">
    <location>
        <position position="267"/>
    </location>
</feature>
<feature type="glycosylation site" description="N-linked (GlcNAc...) asparagine" evidence="2">
    <location>
        <position position="307"/>
    </location>
</feature>
<feature type="glycosylation site" description="N-linked (GlcNAc...) asparagine" evidence="2">
    <location>
        <position position="345"/>
    </location>
</feature>
<feature type="disulfide bond" evidence="6">
    <location>
        <begin position="123"/>
        <end position="126"/>
    </location>
</feature>
<feature type="disulfide bond" evidence="6">
    <location>
        <begin position="129"/>
        <end position="203"/>
    </location>
</feature>
<feature type="disulfide bond" evidence="6">
    <location>
        <begin position="150"/>
        <end position="168"/>
    </location>
</feature>
<feature type="disulfide bond" evidence="6">
    <location>
        <begin position="155"/>
        <end position="163"/>
    </location>
</feature>
<feature type="disulfide bond" evidence="6">
    <location>
        <begin position="240"/>
        <end position="434"/>
    </location>
</feature>
<feature type="disulfide bond" evidence="6">
    <location>
        <begin position="354"/>
        <end position="395"/>
    </location>
</feature>
<feature type="sequence variant" description="In nepenthesin-1b." evidence="5">
    <original>D</original>
    <variation>V</variation>
    <location>
        <position position="233"/>
    </location>
</feature>
<feature type="sequence variant" description="In nepenthesin-1b." evidence="5">
    <original>N</original>
    <variation>T</variation>
    <location>
        <position position="251"/>
    </location>
</feature>
<feature type="sequence variant" description="In nepenthesin-1b." evidence="5">
    <original>G</original>
    <variation>E</variation>
    <location>
        <position position="392"/>
    </location>
</feature>
<sequence>MASSLYSFLLALSIVYIFVAPTHSTSRTALNHRHEAKVTGFQIMLEHVDSGKNLTKFQLLERAIERGSRRLQRLEAMLNGPSGVETSVYAGDGEYLMNLSIGTPAQPFSAIMDTGSDLIWTQCQPCTQCFNQSTPIFNPQGSSSFSTLPCSSQLCQALSSPTCSNNFCQYTYGYGDGSETQGSMGTETLTFGSVSIPNITFGCGENNQGFGQGNGAGLVGMGRGPLSLPSQLDVTKFSYCMTPIGSSTPSNLLLGSLANSVTAGSPNTTLIQSSQIPTFYYITLNGLSVGSTRLPIDPSAFALNSNNGTGGIIIDSGTTLTYFVNNAYQSVRQEFISQINLPVVNGSSSGFDLCFQTPSDPSNLQIPTFVMHFDGGDLELPSENYFISPSNGLICLAMGSSSQGMSIFGNIQQQNMLVVYDTGNSVVSFASAQCGAS</sequence>
<proteinExistence type="evidence at protein level"/>
<evidence type="ECO:0000250" key="1"/>
<evidence type="ECO:0000255" key="2"/>
<evidence type="ECO:0000255" key="3">
    <source>
        <dbReference type="PROSITE-ProRule" id="PRU01103"/>
    </source>
</evidence>
<evidence type="ECO:0000255" key="4">
    <source>
        <dbReference type="PROSITE-ProRule" id="PRU10094"/>
    </source>
</evidence>
<evidence type="ECO:0000269" key="5">
    <source>
    </source>
</evidence>
<evidence type="ECO:0000305" key="6"/>
<keyword id="KW-0064">Aspartyl protease</keyword>
<keyword id="KW-1015">Disulfide bond</keyword>
<keyword id="KW-0325">Glycoprotein</keyword>
<keyword id="KW-0378">Hydrolase</keyword>
<keyword id="KW-0645">Protease</keyword>
<keyword id="KW-0964">Secreted</keyword>
<keyword id="KW-0732">Signal</keyword>
<keyword id="KW-0865">Zymogen</keyword>
<organism>
    <name type="scientific">Nepenthes gracilis</name>
    <name type="common">Slender pitcher plant</name>
    <dbReference type="NCBI Taxonomy" id="150966"/>
    <lineage>
        <taxon>Eukaryota</taxon>
        <taxon>Viridiplantae</taxon>
        <taxon>Streptophyta</taxon>
        <taxon>Embryophyta</taxon>
        <taxon>Tracheophyta</taxon>
        <taxon>Spermatophyta</taxon>
        <taxon>Magnoliopsida</taxon>
        <taxon>eudicotyledons</taxon>
        <taxon>Gunneridae</taxon>
        <taxon>Pentapetalae</taxon>
        <taxon>Caryophyllales</taxon>
        <taxon>Nepenthaceae</taxon>
        <taxon>Nepenthes</taxon>
    </lineage>
</organism>